<proteinExistence type="inferred from homology"/>
<organism>
    <name type="scientific">Bobartia gladiata</name>
    <name type="common">Sword rush-lily</name>
    <dbReference type="NCBI Taxonomy" id="58946"/>
    <lineage>
        <taxon>Eukaryota</taxon>
        <taxon>Viridiplantae</taxon>
        <taxon>Streptophyta</taxon>
        <taxon>Embryophyta</taxon>
        <taxon>Tracheophyta</taxon>
        <taxon>Spermatophyta</taxon>
        <taxon>Magnoliopsida</taxon>
        <taxon>Liliopsida</taxon>
        <taxon>Asparagales</taxon>
        <taxon>Iridaceae</taxon>
        <taxon>Iridoideae</taxon>
        <taxon>Irideae</taxon>
        <taxon>Bobartia</taxon>
    </lineage>
</organism>
<feature type="chain" id="PRO_0000132544" description="Small ribosomal subunit protein uS4c">
    <location>
        <begin position="1" status="less than"/>
        <end position="194" status="greater than"/>
    </location>
</feature>
<feature type="domain" description="S4 RNA-binding">
    <location>
        <begin position="82"/>
        <end position="143"/>
    </location>
</feature>
<feature type="non-terminal residue">
    <location>
        <position position="1"/>
    </location>
</feature>
<feature type="non-terminal residue">
    <location>
        <position position="194"/>
    </location>
</feature>
<comment type="function">
    <text evidence="1">One of the primary rRNA binding proteins, it binds directly to 16S rRNA where it nucleates assembly of the body of the 30S subunit.</text>
</comment>
<comment type="function">
    <text evidence="1">With S5 and S12 plays an important role in translational accuracy.</text>
</comment>
<comment type="subunit">
    <text evidence="1">Part of the 30S ribosomal subunit. Contacts protein S5. The interaction surface between S4 and S5 is involved in control of translational fidelity (By similarity).</text>
</comment>
<comment type="subcellular location">
    <subcellularLocation>
        <location>Plastid</location>
        <location>Chloroplast</location>
    </subcellularLocation>
</comment>
<comment type="similarity">
    <text evidence="2">Belongs to the universal ribosomal protein uS4 family.</text>
</comment>
<keyword id="KW-0150">Chloroplast</keyword>
<keyword id="KW-0934">Plastid</keyword>
<keyword id="KW-0687">Ribonucleoprotein</keyword>
<keyword id="KW-0689">Ribosomal protein</keyword>
<keyword id="KW-0694">RNA-binding</keyword>
<keyword id="KW-0699">rRNA-binding</keyword>
<reference key="1">
    <citation type="journal article" date="1997" name="Plant Syst. Evol.">
        <title>Phylogenetic analysis of Iridaceae with parsimony and distance methods using the plastid gene rps4.</title>
        <authorList>
            <person name="Souza-Chies T.T."/>
            <person name="Bittar G."/>
            <person name="Nadot S."/>
            <person name="Carter L."/>
            <person name="Besin E."/>
            <person name="Lejeune B.P."/>
        </authorList>
    </citation>
    <scope>NUCLEOTIDE SEQUENCE [GENOMIC DNA]</scope>
</reference>
<protein>
    <recommendedName>
        <fullName evidence="2">Small ribosomal subunit protein uS4c</fullName>
    </recommendedName>
    <alternativeName>
        <fullName>30S ribosomal protein S4, chloroplastic</fullName>
    </alternativeName>
</protein>
<name>RR4_BOBGL</name>
<gene>
    <name type="primary">rps4</name>
</gene>
<dbReference type="EMBL" id="Z68268">
    <property type="protein sequence ID" value="CAA92565.1"/>
    <property type="molecule type" value="Genomic_DNA"/>
</dbReference>
<dbReference type="SMR" id="O19992"/>
<dbReference type="GO" id="GO:0009507">
    <property type="term" value="C:chloroplast"/>
    <property type="evidence" value="ECO:0007669"/>
    <property type="project" value="UniProtKB-SubCell"/>
</dbReference>
<dbReference type="GO" id="GO:0015935">
    <property type="term" value="C:small ribosomal subunit"/>
    <property type="evidence" value="ECO:0007669"/>
    <property type="project" value="InterPro"/>
</dbReference>
<dbReference type="GO" id="GO:0019843">
    <property type="term" value="F:rRNA binding"/>
    <property type="evidence" value="ECO:0007669"/>
    <property type="project" value="UniProtKB-KW"/>
</dbReference>
<dbReference type="GO" id="GO:0003735">
    <property type="term" value="F:structural constituent of ribosome"/>
    <property type="evidence" value="ECO:0007669"/>
    <property type="project" value="InterPro"/>
</dbReference>
<dbReference type="GO" id="GO:0042274">
    <property type="term" value="P:ribosomal small subunit biogenesis"/>
    <property type="evidence" value="ECO:0007669"/>
    <property type="project" value="TreeGrafter"/>
</dbReference>
<dbReference type="GO" id="GO:0006412">
    <property type="term" value="P:translation"/>
    <property type="evidence" value="ECO:0007669"/>
    <property type="project" value="InterPro"/>
</dbReference>
<dbReference type="CDD" id="cd00165">
    <property type="entry name" value="S4"/>
    <property type="match status" value="1"/>
</dbReference>
<dbReference type="FunFam" id="1.10.1050.10:FF:000002">
    <property type="entry name" value="30S ribosomal protein S4, chloroplastic"/>
    <property type="match status" value="1"/>
</dbReference>
<dbReference type="FunFam" id="3.10.290.10:FF:000081">
    <property type="entry name" value="30S ribosomal protein S4, chloroplastic"/>
    <property type="match status" value="1"/>
</dbReference>
<dbReference type="Gene3D" id="1.10.1050.10">
    <property type="entry name" value="Ribosomal Protein S4 Delta 41, Chain A, domain 1"/>
    <property type="match status" value="1"/>
</dbReference>
<dbReference type="Gene3D" id="3.10.290.10">
    <property type="entry name" value="RNA-binding S4 domain"/>
    <property type="match status" value="1"/>
</dbReference>
<dbReference type="HAMAP" id="MF_01306_B">
    <property type="entry name" value="Ribosomal_uS4_B"/>
    <property type="match status" value="1"/>
</dbReference>
<dbReference type="InterPro" id="IPR022801">
    <property type="entry name" value="Ribosomal_uS4"/>
</dbReference>
<dbReference type="InterPro" id="IPR005709">
    <property type="entry name" value="Ribosomal_uS4_bac-type"/>
</dbReference>
<dbReference type="InterPro" id="IPR018079">
    <property type="entry name" value="Ribosomal_uS4_CS"/>
</dbReference>
<dbReference type="InterPro" id="IPR001912">
    <property type="entry name" value="Ribosomal_uS4_N"/>
</dbReference>
<dbReference type="InterPro" id="IPR002942">
    <property type="entry name" value="S4_RNA-bd"/>
</dbReference>
<dbReference type="InterPro" id="IPR036986">
    <property type="entry name" value="S4_RNA-bd_sf"/>
</dbReference>
<dbReference type="NCBIfam" id="NF003717">
    <property type="entry name" value="PRK05327.1"/>
    <property type="match status" value="1"/>
</dbReference>
<dbReference type="NCBIfam" id="TIGR01017">
    <property type="entry name" value="rpsD_bact"/>
    <property type="match status" value="1"/>
</dbReference>
<dbReference type="PANTHER" id="PTHR11831">
    <property type="entry name" value="30S 40S RIBOSOMAL PROTEIN"/>
    <property type="match status" value="1"/>
</dbReference>
<dbReference type="PANTHER" id="PTHR11831:SF4">
    <property type="entry name" value="SMALL RIBOSOMAL SUBUNIT PROTEIN US4M"/>
    <property type="match status" value="1"/>
</dbReference>
<dbReference type="Pfam" id="PF00163">
    <property type="entry name" value="Ribosomal_S4"/>
    <property type="match status" value="1"/>
</dbReference>
<dbReference type="Pfam" id="PF01479">
    <property type="entry name" value="S4"/>
    <property type="match status" value="1"/>
</dbReference>
<dbReference type="SMART" id="SM01390">
    <property type="entry name" value="Ribosomal_S4"/>
    <property type="match status" value="1"/>
</dbReference>
<dbReference type="SMART" id="SM00363">
    <property type="entry name" value="S4"/>
    <property type="match status" value="1"/>
</dbReference>
<dbReference type="SUPFAM" id="SSF55174">
    <property type="entry name" value="Alpha-L RNA-binding motif"/>
    <property type="match status" value="1"/>
</dbReference>
<dbReference type="PROSITE" id="PS00632">
    <property type="entry name" value="RIBOSOMAL_S4"/>
    <property type="match status" value="1"/>
</dbReference>
<dbReference type="PROSITE" id="PS50889">
    <property type="entry name" value="S4"/>
    <property type="match status" value="1"/>
</dbReference>
<evidence type="ECO:0000250" key="1"/>
<evidence type="ECO:0000305" key="2"/>
<sequence>RFKKIRRLGALPGLTSKRPRSGSDLKNQLRSGKRSQYRIRLEEKQKLRFHYGLTERQLLKYVHIAGKAKGSTGQVLLQLLEMRLDNILFRLGMASTIPGARQLVTHRHILVNGRIVDIPSYRCKPRDIITTKDKQRSKALIQDYTASSPHEELPNHLTIDPIQYKGLVNQIIDSKWIGLKINELLVVEYYSRQT</sequence>
<accession>O19992</accession>
<geneLocation type="chloroplast"/>